<gene>
    <name evidence="7" type="primary">DAO</name>
    <name evidence="10" type="ORF">ZEAMMB73_Zm00001d018820</name>
</gene>
<sequence>MSAAPPRRVVICGGGVVGACTAYFLATHAASPTVPTLVERCAPACAASGKAGGFLALDWCDSTPALSRLARASFALHRRLADALGGADAYGFRPVHTLSVLLPPHPAASSSPPHPLLPPWVDPSASAAPPRELGTPDTTAQVHPGLFTKAVLAASGAEVVIGEVERVAVAWDGRVAGVVVKGRDGVLDADAVVLALGPWSGRLEVVSEVFDVSGLKAHSIVLRPREPEKVTPHCLFLSYQPEPGAKMLDPEVYPRPTGEVYICGMSKDENPPDDPATITGEPDSIAMLHKIAGKVSSQLKKEEGAEVVAEQACYLPCTADGLPVIGEIPGVKGCYVATGHSCWGILNGPATGAALAELILDGKAKIVDLEPFSPARFLKRRSRRGV</sequence>
<dbReference type="EC" id="1.4.3.3" evidence="5"/>
<dbReference type="EC" id="1.4.3.1" evidence="5"/>
<dbReference type="EMBL" id="AM407717">
    <property type="protein sequence ID" value="CAL58663.1"/>
    <property type="molecule type" value="mRNA"/>
</dbReference>
<dbReference type="EMBL" id="BT065627">
    <property type="protein sequence ID" value="ACN31503.1"/>
    <property type="molecule type" value="mRNA"/>
</dbReference>
<dbReference type="EMBL" id="CM007650">
    <property type="protein sequence ID" value="ONM51393.1"/>
    <property type="molecule type" value="Genomic_DNA"/>
</dbReference>
<dbReference type="EMBL" id="CM007650">
    <property type="protein sequence ID" value="ONM51394.1"/>
    <property type="molecule type" value="Genomic_DNA"/>
</dbReference>
<dbReference type="EMBL" id="CM007650">
    <property type="protein sequence ID" value="ONM51395.1"/>
    <property type="molecule type" value="Genomic_DNA"/>
</dbReference>
<dbReference type="RefSeq" id="NP_001105990.1">
    <property type="nucleotide sequence ID" value="NM_001112520.1"/>
</dbReference>
<dbReference type="RefSeq" id="XP_008650752.1">
    <property type="nucleotide sequence ID" value="XM_008652530.1"/>
</dbReference>
<dbReference type="RefSeq" id="XP_008650753.1">
    <property type="nucleotide sequence ID" value="XM_008652531.1"/>
</dbReference>
<dbReference type="RefSeq" id="XP_008650755.1">
    <property type="nucleotide sequence ID" value="XM_008652533.1"/>
</dbReference>
<dbReference type="SMR" id="C0PBF8"/>
<dbReference type="FunCoup" id="C0PBF8">
    <property type="interactions" value="365"/>
</dbReference>
<dbReference type="IntAct" id="C0PBF8">
    <property type="interactions" value="2"/>
</dbReference>
<dbReference type="STRING" id="4577.C0PBF8"/>
<dbReference type="PaxDb" id="4577-GRMZM2G025977_P01"/>
<dbReference type="EnsemblPlants" id="Zm00001eb300250_T005">
    <property type="protein sequence ID" value="Zm00001eb300250_P005"/>
    <property type="gene ID" value="Zm00001eb300250"/>
</dbReference>
<dbReference type="EnsemblPlants" id="Zm00001eb300250_T006">
    <property type="protein sequence ID" value="Zm00001eb300250_P006"/>
    <property type="gene ID" value="Zm00001eb300250"/>
</dbReference>
<dbReference type="GeneID" id="100037820"/>
<dbReference type="Gramene" id="Zm00001eb300250_T005">
    <property type="protein sequence ID" value="Zm00001eb300250_P005"/>
    <property type="gene ID" value="Zm00001eb300250"/>
</dbReference>
<dbReference type="Gramene" id="Zm00001eb300250_T006">
    <property type="protein sequence ID" value="Zm00001eb300250_P006"/>
    <property type="gene ID" value="Zm00001eb300250"/>
</dbReference>
<dbReference type="KEGG" id="zma:100037820"/>
<dbReference type="eggNOG" id="KOG2852">
    <property type="taxonomic scope" value="Eukaryota"/>
</dbReference>
<dbReference type="InParanoid" id="C0PBF8"/>
<dbReference type="OMA" id="DDTVYAC"/>
<dbReference type="OrthoDB" id="498204at2759"/>
<dbReference type="BRENDA" id="1.4.3.3">
    <property type="organism ID" value="6752"/>
</dbReference>
<dbReference type="Proteomes" id="UP000007305">
    <property type="component" value="Chromosome 7"/>
</dbReference>
<dbReference type="ExpressionAtlas" id="C0PBF8">
    <property type="expression patterns" value="baseline and differential"/>
</dbReference>
<dbReference type="GO" id="GO:0005737">
    <property type="term" value="C:cytoplasm"/>
    <property type="evidence" value="ECO:0000318"/>
    <property type="project" value="GO_Central"/>
</dbReference>
<dbReference type="GO" id="GO:0003884">
    <property type="term" value="F:D-amino-acid oxidase activity"/>
    <property type="evidence" value="ECO:0000314"/>
    <property type="project" value="UniProtKB"/>
</dbReference>
<dbReference type="GO" id="GO:0008445">
    <property type="term" value="F:D-aspartate oxidase activity"/>
    <property type="evidence" value="ECO:0000314"/>
    <property type="project" value="UniProtKB"/>
</dbReference>
<dbReference type="GO" id="GO:0019740">
    <property type="term" value="P:nitrogen utilization"/>
    <property type="evidence" value="ECO:0000250"/>
    <property type="project" value="UniProtKB"/>
</dbReference>
<dbReference type="FunFam" id="3.50.50.60:FF:000360">
    <property type="entry name" value="FAD-dependent oxidoreductase family protein"/>
    <property type="match status" value="1"/>
</dbReference>
<dbReference type="FunFam" id="3.30.9.10:FF:000033">
    <property type="entry name" value="Putative oxidoreductase C1F5.03c"/>
    <property type="match status" value="1"/>
</dbReference>
<dbReference type="Gene3D" id="3.50.50.60">
    <property type="entry name" value="FAD/NAD(P)-binding domain"/>
    <property type="match status" value="2"/>
</dbReference>
<dbReference type="InterPro" id="IPR006076">
    <property type="entry name" value="FAD-dep_OxRdtase"/>
</dbReference>
<dbReference type="InterPro" id="IPR036188">
    <property type="entry name" value="FAD/NAD-bd_sf"/>
</dbReference>
<dbReference type="PANTHER" id="PTHR13847:SF150">
    <property type="entry name" value="OXIDOREDUCTASE TDA3-RELATED"/>
    <property type="match status" value="1"/>
</dbReference>
<dbReference type="PANTHER" id="PTHR13847">
    <property type="entry name" value="SARCOSINE DEHYDROGENASE-RELATED"/>
    <property type="match status" value="1"/>
</dbReference>
<dbReference type="Pfam" id="PF01266">
    <property type="entry name" value="DAO"/>
    <property type="match status" value="1"/>
</dbReference>
<dbReference type="SUPFAM" id="SSF51905">
    <property type="entry name" value="FAD/NAD(P)-binding domain"/>
    <property type="match status" value="1"/>
</dbReference>
<dbReference type="PROSITE" id="PS51257">
    <property type="entry name" value="PROKAR_LIPOPROTEIN"/>
    <property type="match status" value="1"/>
</dbReference>
<feature type="chain" id="PRO_0000460382" description="D-amino-acid oxidase">
    <location>
        <begin position="1"/>
        <end position="386"/>
    </location>
</feature>
<feature type="region of interest" description="Disordered" evidence="4">
    <location>
        <begin position="109"/>
        <end position="138"/>
    </location>
</feature>
<feature type="compositionally biased region" description="Pro residues" evidence="4">
    <location>
        <begin position="112"/>
        <end position="121"/>
    </location>
</feature>
<feature type="binding site" evidence="2">
    <location>
        <position position="14"/>
    </location>
    <ligand>
        <name>FAD</name>
        <dbReference type="ChEBI" id="CHEBI:57692"/>
    </ligand>
</feature>
<feature type="binding site" evidence="2">
    <location>
        <position position="15"/>
    </location>
    <ligand>
        <name>FAD</name>
        <dbReference type="ChEBI" id="CHEBI:57692"/>
    </ligand>
</feature>
<feature type="binding site" evidence="2">
    <location>
        <position position="16"/>
    </location>
    <ligand>
        <name>FAD</name>
        <dbReference type="ChEBI" id="CHEBI:57692"/>
    </ligand>
</feature>
<feature type="binding site" evidence="2">
    <location>
        <position position="17"/>
    </location>
    <ligand>
        <name>FAD</name>
        <dbReference type="ChEBI" id="CHEBI:57692"/>
    </ligand>
</feature>
<feature type="binding site" evidence="2">
    <location>
        <position position="39"/>
    </location>
    <ligand>
        <name>FAD</name>
        <dbReference type="ChEBI" id="CHEBI:57692"/>
    </ligand>
</feature>
<feature type="binding site" evidence="2">
    <location>
        <position position="40"/>
    </location>
    <ligand>
        <name>FAD</name>
        <dbReference type="ChEBI" id="CHEBI:57692"/>
    </ligand>
</feature>
<feature type="binding site" evidence="1">
    <location>
        <position position="51"/>
    </location>
    <ligand>
        <name>FAD</name>
        <dbReference type="ChEBI" id="CHEBI:57692"/>
    </ligand>
</feature>
<feature type="binding site" evidence="2">
    <location>
        <position position="52"/>
    </location>
    <ligand>
        <name>FAD</name>
        <dbReference type="ChEBI" id="CHEBI:57692"/>
    </ligand>
</feature>
<feature type="binding site" evidence="2">
    <location>
        <position position="53"/>
    </location>
    <ligand>
        <name>FAD</name>
        <dbReference type="ChEBI" id="CHEBI:57692"/>
    </ligand>
</feature>
<feature type="binding site" evidence="1">
    <location>
        <position position="174"/>
    </location>
    <ligand>
        <name>FAD</name>
        <dbReference type="ChEBI" id="CHEBI:57692"/>
    </ligand>
</feature>
<feature type="binding site" evidence="2">
    <location>
        <position position="175"/>
    </location>
    <ligand>
        <name>FAD</name>
        <dbReference type="ChEBI" id="CHEBI:57692"/>
    </ligand>
</feature>
<feature type="binding site" evidence="2">
    <location>
        <position position="176"/>
    </location>
    <ligand>
        <name>FAD</name>
        <dbReference type="ChEBI" id="CHEBI:57692"/>
    </ligand>
</feature>
<feature type="binding site" evidence="2">
    <location>
        <position position="253"/>
    </location>
    <ligand>
        <name>D-serine</name>
        <dbReference type="ChEBI" id="CHEBI:35247"/>
    </ligand>
</feature>
<feature type="binding site" evidence="1">
    <location>
        <position position="261"/>
    </location>
    <ligand>
        <name>D-proline</name>
        <dbReference type="ChEBI" id="CHEBI:57726"/>
    </ligand>
</feature>
<feature type="binding site" evidence="2">
    <location>
        <position position="261"/>
    </location>
    <ligand>
        <name>D-serine</name>
        <dbReference type="ChEBI" id="CHEBI:35247"/>
    </ligand>
</feature>
<feature type="binding site" evidence="2">
    <location>
        <position position="332"/>
    </location>
    <ligand>
        <name>D-dopa</name>
        <dbReference type="ChEBI" id="CHEBI:149689"/>
    </ligand>
</feature>
<feature type="binding site" evidence="1">
    <location>
        <position position="332"/>
    </location>
    <ligand>
        <name>D-proline</name>
        <dbReference type="ChEBI" id="CHEBI:57726"/>
    </ligand>
</feature>
<feature type="binding site" evidence="2">
    <location>
        <position position="332"/>
    </location>
    <ligand>
        <name>D-serine</name>
        <dbReference type="ChEBI" id="CHEBI:35247"/>
    </ligand>
</feature>
<feature type="binding site" evidence="2">
    <location>
        <position position="332"/>
    </location>
    <ligand>
        <name>FAD</name>
        <dbReference type="ChEBI" id="CHEBI:57692"/>
    </ligand>
</feature>
<feature type="binding site" evidence="2">
    <location>
        <position position="344"/>
    </location>
    <ligand>
        <name>FAD</name>
        <dbReference type="ChEBI" id="CHEBI:57692"/>
    </ligand>
</feature>
<feature type="binding site" evidence="2">
    <location>
        <position position="345"/>
    </location>
    <ligand>
        <name>FAD</name>
        <dbReference type="ChEBI" id="CHEBI:57692"/>
    </ligand>
</feature>
<feature type="binding site" evidence="2">
    <location>
        <position position="362"/>
    </location>
    <ligand>
        <name>D-dopa</name>
        <dbReference type="ChEBI" id="CHEBI:149689"/>
    </ligand>
</feature>
<feature type="binding site" evidence="1">
    <location>
        <position position="362"/>
    </location>
    <ligand>
        <name>D-proline</name>
        <dbReference type="ChEBI" id="CHEBI:57726"/>
    </ligand>
</feature>
<feature type="binding site" evidence="2">
    <location>
        <position position="362"/>
    </location>
    <ligand>
        <name>D-serine</name>
        <dbReference type="ChEBI" id="CHEBI:35247"/>
    </ligand>
</feature>
<feature type="binding site" evidence="2">
    <location>
        <position position="362"/>
    </location>
    <ligand>
        <name>FAD</name>
        <dbReference type="ChEBI" id="CHEBI:57692"/>
    </ligand>
</feature>
<feature type="binding site" evidence="2">
    <location>
        <position position="364"/>
    </location>
    <ligand>
        <name>FAD</name>
        <dbReference type="ChEBI" id="CHEBI:57692"/>
    </ligand>
</feature>
<feature type="sequence conflict" description="In Ref. 1; CAL58663." evidence="7" ref="1">
    <original>P</original>
    <variation>L</variation>
    <location>
        <position position="43"/>
    </location>
</feature>
<feature type="sequence conflict" description="In Ref. 1; CAL58663." evidence="7" ref="1">
    <original>F</original>
    <variation>L</variation>
    <location>
        <position position="210"/>
    </location>
</feature>
<feature type="sequence conflict" description="In Ref. 1; CAL58663." evidence="7" ref="1">
    <original>L</original>
    <variation>F</variation>
    <location>
        <position position="222"/>
    </location>
</feature>
<keyword id="KW-0274">FAD</keyword>
<keyword id="KW-0285">Flavoprotein</keyword>
<keyword id="KW-0560">Oxidoreductase</keyword>
<keyword id="KW-1185">Reference proteome</keyword>
<organism evidence="8">
    <name type="scientific">Zea mays</name>
    <name type="common">Maize</name>
    <dbReference type="NCBI Taxonomy" id="4577"/>
    <lineage>
        <taxon>Eukaryota</taxon>
        <taxon>Viridiplantae</taxon>
        <taxon>Streptophyta</taxon>
        <taxon>Embryophyta</taxon>
        <taxon>Tracheophyta</taxon>
        <taxon>Spermatophyta</taxon>
        <taxon>Magnoliopsida</taxon>
        <taxon>Liliopsida</taxon>
        <taxon>Poales</taxon>
        <taxon>Poaceae</taxon>
        <taxon>PACMAD clade</taxon>
        <taxon>Panicoideae</taxon>
        <taxon>Andropogonodae</taxon>
        <taxon>Andropogoneae</taxon>
        <taxon>Tripsacinae</taxon>
        <taxon>Zea</taxon>
    </lineage>
</organism>
<evidence type="ECO:0000250" key="1">
    <source>
        <dbReference type="UniProtKB" id="P00371"/>
    </source>
</evidence>
<evidence type="ECO:0000250" key="2">
    <source>
        <dbReference type="UniProtKB" id="P14920"/>
    </source>
</evidence>
<evidence type="ECO:0000250" key="3">
    <source>
        <dbReference type="UniProtKB" id="Q9HGY3"/>
    </source>
</evidence>
<evidence type="ECO:0000256" key="4">
    <source>
        <dbReference type="SAM" id="MobiDB-lite"/>
    </source>
</evidence>
<evidence type="ECO:0000269" key="5">
    <source>
    </source>
</evidence>
<evidence type="ECO:0000303" key="6">
    <source>
    </source>
</evidence>
<evidence type="ECO:0000305" key="7"/>
<evidence type="ECO:0000312" key="8">
    <source>
        <dbReference type="EMBL" id="ACN31503.1"/>
    </source>
</evidence>
<evidence type="ECO:0000312" key="9">
    <source>
        <dbReference type="EMBL" id="CAL58663.1"/>
    </source>
</evidence>
<evidence type="ECO:0000312" key="10">
    <source>
        <dbReference type="EMBL" id="ONM51393.1"/>
    </source>
</evidence>
<evidence type="ECO:0000312" key="11">
    <source>
        <dbReference type="Proteomes" id="UP000007305"/>
    </source>
</evidence>
<protein>
    <recommendedName>
        <fullName evidence="6">D-amino-acid oxidase</fullName>
        <shortName evidence="7">DAAO</shortName>
        <shortName evidence="7">DAMOX</shortName>
        <shortName evidence="7">DAO</shortName>
        <ecNumber evidence="5">1.4.3.3</ecNumber>
    </recommendedName>
    <alternativeName>
        <fullName evidence="7">D-aspartate oxidase</fullName>
        <shortName evidence="7">DASOX</shortName>
        <shortName evidence="7">DASPO</shortName>
        <shortName evidence="7">DDO</shortName>
        <ecNumber evidence="5">1.4.3.1</ecNumber>
    </alternativeName>
    <alternativeName>
        <fullName evidence="6">ZmDAAO</fullName>
    </alternativeName>
</protein>
<comment type="function">
    <text evidence="3 5">Catalyzes the oxidative deamination of D-amino acids with broad substrate specificity (PubMed:19267668). Enables the organism to utilize D-amino acids as a source of nutrients (By similarity).</text>
</comment>
<comment type="catalytic activity">
    <reaction evidence="5">
        <text>a D-alpha-amino acid + O2 + H2O = a 2-oxocarboxylate + H2O2 + NH4(+)</text>
        <dbReference type="Rhea" id="RHEA:21816"/>
        <dbReference type="ChEBI" id="CHEBI:15377"/>
        <dbReference type="ChEBI" id="CHEBI:15379"/>
        <dbReference type="ChEBI" id="CHEBI:16240"/>
        <dbReference type="ChEBI" id="CHEBI:28938"/>
        <dbReference type="ChEBI" id="CHEBI:35179"/>
        <dbReference type="ChEBI" id="CHEBI:59871"/>
        <dbReference type="EC" id="1.4.3.3"/>
    </reaction>
    <physiologicalReaction direction="left-to-right" evidence="5">
        <dbReference type="Rhea" id="RHEA:21817"/>
    </physiologicalReaction>
</comment>
<comment type="catalytic activity">
    <reaction evidence="5">
        <text>D-alanine + O2 + H2O = pyruvate + H2O2 + NH4(+)</text>
        <dbReference type="Rhea" id="RHEA:22688"/>
        <dbReference type="ChEBI" id="CHEBI:15361"/>
        <dbReference type="ChEBI" id="CHEBI:15377"/>
        <dbReference type="ChEBI" id="CHEBI:15379"/>
        <dbReference type="ChEBI" id="CHEBI:16240"/>
        <dbReference type="ChEBI" id="CHEBI:28938"/>
        <dbReference type="ChEBI" id="CHEBI:57416"/>
    </reaction>
    <physiologicalReaction direction="left-to-right" evidence="5">
        <dbReference type="Rhea" id="RHEA:22689"/>
    </physiologicalReaction>
</comment>
<comment type="catalytic activity">
    <reaction evidence="5">
        <text>D-aspartate + O2 + H2O = oxaloacetate + H2O2 + NH4(+)</text>
        <dbReference type="Rhea" id="RHEA:12512"/>
        <dbReference type="ChEBI" id="CHEBI:15377"/>
        <dbReference type="ChEBI" id="CHEBI:15379"/>
        <dbReference type="ChEBI" id="CHEBI:16240"/>
        <dbReference type="ChEBI" id="CHEBI:16452"/>
        <dbReference type="ChEBI" id="CHEBI:28938"/>
        <dbReference type="ChEBI" id="CHEBI:29990"/>
        <dbReference type="EC" id="1.4.3.1"/>
    </reaction>
    <physiologicalReaction direction="left-to-right" evidence="5">
        <dbReference type="Rhea" id="RHEA:12513"/>
    </physiologicalReaction>
</comment>
<comment type="induction">
    <text evidence="5">Expressed when grown in presence of D-alanine.</text>
</comment>
<comment type="similarity">
    <text evidence="7">Belongs to the DAMOX/DASOX family.</text>
</comment>
<reference evidence="9" key="1">
    <citation type="journal article" date="2009" name="Biochemistry (Mosc.)">
        <title>Molecular cloning and expression in Escherichia coli of an active fused Zea mays L. D-amino acid oxidase.</title>
        <authorList>
            <person name="Gholizadeh A."/>
            <person name="Kohnehrouz B.B."/>
        </authorList>
    </citation>
    <scope>NUCLEOTIDE SEQUENCE [MRNA]</scope>
    <scope>FUNCTION</scope>
    <scope>CATALYTIC ACTIVITY</scope>
    <scope>INDUCTION</scope>
    <source>
        <tissue evidence="9">Leaf</tissue>
    </source>
</reference>
<reference evidence="8" key="2">
    <citation type="journal article" date="2009" name="PLoS Genet.">
        <title>Sequencing, mapping, and analysis of 27,455 maize full-length cDNAs.</title>
        <authorList>
            <person name="Soderlund C."/>
            <person name="Descour A."/>
            <person name="Kudrna D."/>
            <person name="Bomhoff M."/>
            <person name="Boyd L."/>
            <person name="Currie J."/>
            <person name="Angelova A."/>
            <person name="Collura K."/>
            <person name="Wissotski M."/>
            <person name="Ashley E."/>
            <person name="Morrow D."/>
            <person name="Fernandes J."/>
            <person name="Walbot V."/>
            <person name="Yu Y."/>
        </authorList>
    </citation>
    <scope>NUCLEOTIDE SEQUENCE [LARGE SCALE MRNA]</scope>
    <source>
        <strain evidence="8">B73</strain>
    </source>
</reference>
<reference evidence="11" key="3">
    <citation type="submission" date="2015-12" db="EMBL/GenBank/DDBJ databases">
        <title>Update maize B73 reference genome by single molecule sequencing technologies.</title>
        <authorList>
            <consortium name="Maize Genome Sequencing Project"/>
            <person name="Ware D."/>
        </authorList>
    </citation>
    <scope>NUCLEOTIDE SEQUENCE [LARGE SCALE GENOMIC DNA]</scope>
    <source>
        <strain evidence="11">cv. B73</strain>
        <tissue evidence="10">Seedling</tissue>
    </source>
</reference>
<accession>C0PBF8</accession>
<accession>A0PFJ3</accession>
<proteinExistence type="evidence at protein level"/>
<name>OXDA_MAIZE</name>